<accession>Q3ZAI6</accession>
<keyword id="KW-1003">Cell membrane</keyword>
<keyword id="KW-0444">Lipid biosynthesis</keyword>
<keyword id="KW-0443">Lipid metabolism</keyword>
<keyword id="KW-0472">Membrane</keyword>
<keyword id="KW-0594">Phospholipid biosynthesis</keyword>
<keyword id="KW-1208">Phospholipid metabolism</keyword>
<keyword id="KW-0808">Transferase</keyword>
<keyword id="KW-0812">Transmembrane</keyword>
<keyword id="KW-1133">Transmembrane helix</keyword>
<proteinExistence type="inferred from homology"/>
<feature type="chain" id="PRO_0000188350" description="Glycerol-3-phosphate acyltransferase 1">
    <location>
        <begin position="1"/>
        <end position="208"/>
    </location>
</feature>
<feature type="transmembrane region" description="Helical" evidence="1">
    <location>
        <begin position="52"/>
        <end position="72"/>
    </location>
</feature>
<feature type="transmembrane region" description="Helical" evidence="1">
    <location>
        <begin position="77"/>
        <end position="97"/>
    </location>
</feature>
<feature type="transmembrane region" description="Helical" evidence="1">
    <location>
        <begin position="112"/>
        <end position="132"/>
    </location>
</feature>
<feature type="transmembrane region" description="Helical" evidence="1">
    <location>
        <begin position="140"/>
        <end position="160"/>
    </location>
</feature>
<feature type="transmembrane region" description="Helical" evidence="1">
    <location>
        <begin position="161"/>
        <end position="181"/>
    </location>
</feature>
<comment type="function">
    <text evidence="1">Catalyzes the transfer of an acyl group from acyl-phosphate (acyl-PO(4)) to glycerol-3-phosphate (G3P) to form lysophosphatidic acid (LPA). This enzyme utilizes acyl-phosphate as fatty acyl donor, but not acyl-CoA or acyl-ACP.</text>
</comment>
<comment type="catalytic activity">
    <reaction evidence="1">
        <text>an acyl phosphate + sn-glycerol 3-phosphate = a 1-acyl-sn-glycero-3-phosphate + phosphate</text>
        <dbReference type="Rhea" id="RHEA:34075"/>
        <dbReference type="ChEBI" id="CHEBI:43474"/>
        <dbReference type="ChEBI" id="CHEBI:57597"/>
        <dbReference type="ChEBI" id="CHEBI:57970"/>
        <dbReference type="ChEBI" id="CHEBI:59918"/>
        <dbReference type="EC" id="2.3.1.275"/>
    </reaction>
</comment>
<comment type="pathway">
    <text evidence="1">Lipid metabolism; phospholipid metabolism.</text>
</comment>
<comment type="subunit">
    <text evidence="1">Probably interacts with PlsX.</text>
</comment>
<comment type="subcellular location">
    <subcellularLocation>
        <location evidence="1">Cell membrane</location>
        <topology evidence="1">Multi-pass membrane protein</topology>
    </subcellularLocation>
</comment>
<comment type="similarity">
    <text evidence="1">Belongs to the PlsY family.</text>
</comment>
<evidence type="ECO:0000255" key="1">
    <source>
        <dbReference type="HAMAP-Rule" id="MF_01043"/>
    </source>
</evidence>
<gene>
    <name evidence="1" type="primary">plsY1</name>
    <name type="ordered locus">DET0008</name>
</gene>
<reference key="1">
    <citation type="journal article" date="2005" name="Science">
        <title>Genome sequence of the PCE-dechlorinating bacterium Dehalococcoides ethenogenes.</title>
        <authorList>
            <person name="Seshadri R."/>
            <person name="Adrian L."/>
            <person name="Fouts D.E."/>
            <person name="Eisen J.A."/>
            <person name="Phillippy A.M."/>
            <person name="Methe B.A."/>
            <person name="Ward N.L."/>
            <person name="Nelson W.C."/>
            <person name="DeBoy R.T."/>
            <person name="Khouri H.M."/>
            <person name="Kolonay J.F."/>
            <person name="Dodson R.J."/>
            <person name="Daugherty S.C."/>
            <person name="Brinkac L.M."/>
            <person name="Sullivan S.A."/>
            <person name="Madupu R."/>
            <person name="Nelson K.E."/>
            <person name="Kang K.H."/>
            <person name="Impraim M."/>
            <person name="Tran K."/>
            <person name="Robinson J.M."/>
            <person name="Forberger H.A."/>
            <person name="Fraser C.M."/>
            <person name="Zinder S.H."/>
            <person name="Heidelberg J.F."/>
        </authorList>
    </citation>
    <scope>NUCLEOTIDE SEQUENCE [LARGE SCALE GENOMIC DNA]</scope>
    <source>
        <strain>ATCC BAA-2266 / KCTC 15142 / 195</strain>
    </source>
</reference>
<organism>
    <name type="scientific">Dehalococcoides mccartyi (strain ATCC BAA-2266 / KCTC 15142 / 195)</name>
    <name type="common">Dehalococcoides ethenogenes (strain 195)</name>
    <dbReference type="NCBI Taxonomy" id="243164"/>
    <lineage>
        <taxon>Bacteria</taxon>
        <taxon>Bacillati</taxon>
        <taxon>Chloroflexota</taxon>
        <taxon>Dehalococcoidia</taxon>
        <taxon>Dehalococcoidales</taxon>
        <taxon>Dehalococcoidaceae</taxon>
        <taxon>Dehalococcoides</taxon>
    </lineage>
</organism>
<protein>
    <recommendedName>
        <fullName evidence="1">Glycerol-3-phosphate acyltransferase 1</fullName>
    </recommendedName>
    <alternativeName>
        <fullName evidence="1">Acyl-PO4 G3P acyltransferase 1</fullName>
    </alternativeName>
    <alternativeName>
        <fullName evidence="1">Acyl-phosphate--glycerol-3-phosphate acyltransferase 1</fullName>
    </alternativeName>
    <alternativeName>
        <fullName evidence="1">G3P acyltransferase 1</fullName>
        <shortName evidence="1">GPAT 1</shortName>
        <ecNumber evidence="1">2.3.1.275</ecNumber>
    </alternativeName>
    <alternativeName>
        <fullName evidence="1">Lysophosphatidic acid synthase 1</fullName>
        <shortName evidence="1">LPA synthase 1</shortName>
    </alternativeName>
</protein>
<name>PLSY1_DEHM1</name>
<dbReference type="EC" id="2.3.1.275" evidence="1"/>
<dbReference type="EMBL" id="CP000027">
    <property type="protein sequence ID" value="AAW39177.1"/>
    <property type="molecule type" value="Genomic_DNA"/>
</dbReference>
<dbReference type="RefSeq" id="WP_010935818.1">
    <property type="nucleotide sequence ID" value="NC_002936.3"/>
</dbReference>
<dbReference type="SMR" id="Q3ZAI6"/>
<dbReference type="STRING" id="243164.DET0008"/>
<dbReference type="GeneID" id="3229135"/>
<dbReference type="KEGG" id="det:DET0008"/>
<dbReference type="PATRIC" id="fig|243164.10.peg.8"/>
<dbReference type="eggNOG" id="COG0344">
    <property type="taxonomic scope" value="Bacteria"/>
</dbReference>
<dbReference type="HOGENOM" id="CLU_081254_7_1_0"/>
<dbReference type="InParanoid" id="Q3ZAI6"/>
<dbReference type="UniPathway" id="UPA00085"/>
<dbReference type="Proteomes" id="UP000008289">
    <property type="component" value="Chromosome"/>
</dbReference>
<dbReference type="GO" id="GO:0005886">
    <property type="term" value="C:plasma membrane"/>
    <property type="evidence" value="ECO:0007669"/>
    <property type="project" value="UniProtKB-SubCell"/>
</dbReference>
<dbReference type="GO" id="GO:0043772">
    <property type="term" value="F:acyl-phosphate glycerol-3-phosphate acyltransferase activity"/>
    <property type="evidence" value="ECO:0007669"/>
    <property type="project" value="UniProtKB-UniRule"/>
</dbReference>
<dbReference type="GO" id="GO:0008654">
    <property type="term" value="P:phospholipid biosynthetic process"/>
    <property type="evidence" value="ECO:0007669"/>
    <property type="project" value="UniProtKB-UniRule"/>
</dbReference>
<dbReference type="HAMAP" id="MF_01043">
    <property type="entry name" value="PlsY"/>
    <property type="match status" value="1"/>
</dbReference>
<dbReference type="InterPro" id="IPR003811">
    <property type="entry name" value="G3P_acylTferase_PlsY"/>
</dbReference>
<dbReference type="NCBIfam" id="NF010992">
    <property type="entry name" value="PRK14416.1"/>
    <property type="match status" value="1"/>
</dbReference>
<dbReference type="PANTHER" id="PTHR30309:SF0">
    <property type="entry name" value="GLYCEROL-3-PHOSPHATE ACYLTRANSFERASE-RELATED"/>
    <property type="match status" value="1"/>
</dbReference>
<dbReference type="PANTHER" id="PTHR30309">
    <property type="entry name" value="INNER MEMBRANE PROTEIN YGIH"/>
    <property type="match status" value="1"/>
</dbReference>
<dbReference type="Pfam" id="PF02660">
    <property type="entry name" value="G3P_acyltransf"/>
    <property type="match status" value="1"/>
</dbReference>
<dbReference type="SMART" id="SM01207">
    <property type="entry name" value="G3P_acyltransf"/>
    <property type="match status" value="1"/>
</dbReference>
<sequence>MSLLIGYFLGSIPSAYLVTRRLTGRDIRQMGGGNMGGLNTFREVGVGAGAAVVLMDLAKGALAVSVAYYLLIQNAQWVILTGFAAVIGHNWPIWLDFKGGKGLGPAFGAMLFLLPVYGLPQHLLILALLVFIPLAITRNIALATGIALFSLPFLVWYGSHSEFATLISVLLFLMIGIKFVLDNRKNLRDPANRRNLIVDHWKRPDKNS</sequence>